<evidence type="ECO:0000255" key="1">
    <source>
        <dbReference type="HAMAP-Rule" id="MF_00016"/>
    </source>
</evidence>
<organism>
    <name type="scientific">Staphylococcus aureus (strain MW2)</name>
    <dbReference type="NCBI Taxonomy" id="196620"/>
    <lineage>
        <taxon>Bacteria</taxon>
        <taxon>Bacillati</taxon>
        <taxon>Bacillota</taxon>
        <taxon>Bacilli</taxon>
        <taxon>Bacillales</taxon>
        <taxon>Staphylococcaceae</taxon>
        <taxon>Staphylococcus</taxon>
    </lineage>
</organism>
<sequence length="334" mass="37646">MNERMVDQSMHSEETDFELSLRPTRLRQYIGQNSIKSNLEVFIKAAKLRHEPLDHVLLFGPPGLGKTTLSNIIANEMEVNIRTVSGPSLERPGDLAAILSGLQPGDVLFIDEIHRLSSVVEEVLYPAMEDFFLDIIIGKGDEARSIRIDLPPFTLVGATTRAGSLTGPLRDRFGVHLRLEYYNESDLKEIIIRTAEVLGTGIDEESAIELAKRSRGTPRVANRLLKRVRDFQQVNEDEQIYIETTKHALGLLQVDQHGLDYIDHKMMNCIIKQYNGGPVGLDTIAVTIGEERITIEDVYEPFLIQKGFLERTPRGRKATPLAYEHFAKSNEERG</sequence>
<keyword id="KW-0067">ATP-binding</keyword>
<keyword id="KW-0963">Cytoplasm</keyword>
<keyword id="KW-0227">DNA damage</keyword>
<keyword id="KW-0233">DNA recombination</keyword>
<keyword id="KW-0234">DNA repair</keyword>
<keyword id="KW-0238">DNA-binding</keyword>
<keyword id="KW-0378">Hydrolase</keyword>
<keyword id="KW-0547">Nucleotide-binding</keyword>
<feature type="chain" id="PRO_0000165599" description="Holliday junction branch migration complex subunit RuvB">
    <location>
        <begin position="1"/>
        <end position="334"/>
    </location>
</feature>
<feature type="region of interest" description="Large ATPase domain (RuvB-L)" evidence="1">
    <location>
        <begin position="1"/>
        <end position="182"/>
    </location>
</feature>
<feature type="region of interest" description="Small ATPAse domain (RuvB-S)" evidence="1">
    <location>
        <begin position="183"/>
        <end position="253"/>
    </location>
</feature>
<feature type="region of interest" description="Head domain (RuvB-H)" evidence="1">
    <location>
        <begin position="256"/>
        <end position="334"/>
    </location>
</feature>
<feature type="binding site" evidence="1">
    <location>
        <position position="21"/>
    </location>
    <ligand>
        <name>ATP</name>
        <dbReference type="ChEBI" id="CHEBI:30616"/>
    </ligand>
</feature>
<feature type="binding site" evidence="1">
    <location>
        <position position="22"/>
    </location>
    <ligand>
        <name>ATP</name>
        <dbReference type="ChEBI" id="CHEBI:30616"/>
    </ligand>
</feature>
<feature type="binding site" evidence="1">
    <location>
        <position position="63"/>
    </location>
    <ligand>
        <name>ATP</name>
        <dbReference type="ChEBI" id="CHEBI:30616"/>
    </ligand>
</feature>
<feature type="binding site" evidence="1">
    <location>
        <position position="66"/>
    </location>
    <ligand>
        <name>ATP</name>
        <dbReference type="ChEBI" id="CHEBI:30616"/>
    </ligand>
</feature>
<feature type="binding site" evidence="1">
    <location>
        <position position="67"/>
    </location>
    <ligand>
        <name>ATP</name>
        <dbReference type="ChEBI" id="CHEBI:30616"/>
    </ligand>
</feature>
<feature type="binding site" evidence="1">
    <location>
        <position position="67"/>
    </location>
    <ligand>
        <name>Mg(2+)</name>
        <dbReference type="ChEBI" id="CHEBI:18420"/>
    </ligand>
</feature>
<feature type="binding site" evidence="1">
    <location>
        <position position="68"/>
    </location>
    <ligand>
        <name>ATP</name>
        <dbReference type="ChEBI" id="CHEBI:30616"/>
    </ligand>
</feature>
<feature type="binding site" evidence="1">
    <location>
        <begin position="129"/>
        <end position="131"/>
    </location>
    <ligand>
        <name>ATP</name>
        <dbReference type="ChEBI" id="CHEBI:30616"/>
    </ligand>
</feature>
<feature type="binding site" evidence="1">
    <location>
        <position position="172"/>
    </location>
    <ligand>
        <name>ATP</name>
        <dbReference type="ChEBI" id="CHEBI:30616"/>
    </ligand>
</feature>
<feature type="binding site" evidence="1">
    <location>
        <position position="182"/>
    </location>
    <ligand>
        <name>ATP</name>
        <dbReference type="ChEBI" id="CHEBI:30616"/>
    </ligand>
</feature>
<feature type="binding site" evidence="1">
    <location>
        <position position="219"/>
    </location>
    <ligand>
        <name>ATP</name>
        <dbReference type="ChEBI" id="CHEBI:30616"/>
    </ligand>
</feature>
<feature type="binding site" evidence="1">
    <location>
        <position position="292"/>
    </location>
    <ligand>
        <name>DNA</name>
        <dbReference type="ChEBI" id="CHEBI:16991"/>
    </ligand>
</feature>
<feature type="binding site" evidence="1">
    <location>
        <position position="311"/>
    </location>
    <ligand>
        <name>DNA</name>
        <dbReference type="ChEBI" id="CHEBI:16991"/>
    </ligand>
</feature>
<feature type="binding site" evidence="1">
    <location>
        <position position="316"/>
    </location>
    <ligand>
        <name>DNA</name>
        <dbReference type="ChEBI" id="CHEBI:16991"/>
    </ligand>
</feature>
<gene>
    <name evidence="1" type="primary">ruvB</name>
    <name type="ordered locus">MW1591</name>
</gene>
<name>RUVB_STAAW</name>
<proteinExistence type="inferred from homology"/>
<protein>
    <recommendedName>
        <fullName evidence="1">Holliday junction branch migration complex subunit RuvB</fullName>
        <ecNumber evidence="1">3.6.4.-</ecNumber>
    </recommendedName>
</protein>
<reference key="1">
    <citation type="journal article" date="2002" name="Lancet">
        <title>Genome and virulence determinants of high virulence community-acquired MRSA.</title>
        <authorList>
            <person name="Baba T."/>
            <person name="Takeuchi F."/>
            <person name="Kuroda M."/>
            <person name="Yuzawa H."/>
            <person name="Aoki K."/>
            <person name="Oguchi A."/>
            <person name="Nagai Y."/>
            <person name="Iwama N."/>
            <person name="Asano K."/>
            <person name="Naimi T."/>
            <person name="Kuroda H."/>
            <person name="Cui L."/>
            <person name="Yamamoto K."/>
            <person name="Hiramatsu K."/>
        </authorList>
    </citation>
    <scope>NUCLEOTIDE SEQUENCE [LARGE SCALE GENOMIC DNA]</scope>
    <source>
        <strain>MW2</strain>
    </source>
</reference>
<accession>P66759</accession>
<accession>Q99TL2</accession>
<dbReference type="EC" id="3.6.4.-" evidence="1"/>
<dbReference type="EMBL" id="BA000033">
    <property type="protein sequence ID" value="BAB95456.1"/>
    <property type="molecule type" value="Genomic_DNA"/>
</dbReference>
<dbReference type="RefSeq" id="WP_001005768.1">
    <property type="nucleotide sequence ID" value="NC_003923.1"/>
</dbReference>
<dbReference type="SMR" id="P66759"/>
<dbReference type="KEGG" id="sam:MW1591"/>
<dbReference type="HOGENOM" id="CLU_055599_1_0_9"/>
<dbReference type="GO" id="GO:0005737">
    <property type="term" value="C:cytoplasm"/>
    <property type="evidence" value="ECO:0007669"/>
    <property type="project" value="UniProtKB-SubCell"/>
</dbReference>
<dbReference type="GO" id="GO:0048476">
    <property type="term" value="C:Holliday junction resolvase complex"/>
    <property type="evidence" value="ECO:0007669"/>
    <property type="project" value="UniProtKB-UniRule"/>
</dbReference>
<dbReference type="GO" id="GO:0005524">
    <property type="term" value="F:ATP binding"/>
    <property type="evidence" value="ECO:0007669"/>
    <property type="project" value="UniProtKB-UniRule"/>
</dbReference>
<dbReference type="GO" id="GO:0016887">
    <property type="term" value="F:ATP hydrolysis activity"/>
    <property type="evidence" value="ECO:0007669"/>
    <property type="project" value="InterPro"/>
</dbReference>
<dbReference type="GO" id="GO:0000400">
    <property type="term" value="F:four-way junction DNA binding"/>
    <property type="evidence" value="ECO:0007669"/>
    <property type="project" value="UniProtKB-UniRule"/>
</dbReference>
<dbReference type="GO" id="GO:0009378">
    <property type="term" value="F:four-way junction helicase activity"/>
    <property type="evidence" value="ECO:0007669"/>
    <property type="project" value="InterPro"/>
</dbReference>
<dbReference type="GO" id="GO:0006310">
    <property type="term" value="P:DNA recombination"/>
    <property type="evidence" value="ECO:0007669"/>
    <property type="project" value="UniProtKB-UniRule"/>
</dbReference>
<dbReference type="GO" id="GO:0006281">
    <property type="term" value="P:DNA repair"/>
    <property type="evidence" value="ECO:0007669"/>
    <property type="project" value="UniProtKB-UniRule"/>
</dbReference>
<dbReference type="CDD" id="cd00009">
    <property type="entry name" value="AAA"/>
    <property type="match status" value="1"/>
</dbReference>
<dbReference type="Gene3D" id="1.10.8.60">
    <property type="match status" value="1"/>
</dbReference>
<dbReference type="Gene3D" id="3.40.50.300">
    <property type="entry name" value="P-loop containing nucleotide triphosphate hydrolases"/>
    <property type="match status" value="1"/>
</dbReference>
<dbReference type="Gene3D" id="1.10.10.10">
    <property type="entry name" value="Winged helix-like DNA-binding domain superfamily/Winged helix DNA-binding domain"/>
    <property type="match status" value="1"/>
</dbReference>
<dbReference type="HAMAP" id="MF_00016">
    <property type="entry name" value="DNA_HJ_migration_RuvB"/>
    <property type="match status" value="1"/>
</dbReference>
<dbReference type="InterPro" id="IPR003593">
    <property type="entry name" value="AAA+_ATPase"/>
</dbReference>
<dbReference type="InterPro" id="IPR041445">
    <property type="entry name" value="AAA_lid_4"/>
</dbReference>
<dbReference type="InterPro" id="IPR004605">
    <property type="entry name" value="DNA_helicase_Holl-junc_RuvB"/>
</dbReference>
<dbReference type="InterPro" id="IPR027417">
    <property type="entry name" value="P-loop_NTPase"/>
</dbReference>
<dbReference type="InterPro" id="IPR008824">
    <property type="entry name" value="RuvB-like_N"/>
</dbReference>
<dbReference type="InterPro" id="IPR008823">
    <property type="entry name" value="RuvB_C"/>
</dbReference>
<dbReference type="InterPro" id="IPR036388">
    <property type="entry name" value="WH-like_DNA-bd_sf"/>
</dbReference>
<dbReference type="InterPro" id="IPR036390">
    <property type="entry name" value="WH_DNA-bd_sf"/>
</dbReference>
<dbReference type="NCBIfam" id="NF000868">
    <property type="entry name" value="PRK00080.1"/>
    <property type="match status" value="1"/>
</dbReference>
<dbReference type="NCBIfam" id="TIGR00635">
    <property type="entry name" value="ruvB"/>
    <property type="match status" value="1"/>
</dbReference>
<dbReference type="PANTHER" id="PTHR42848">
    <property type="match status" value="1"/>
</dbReference>
<dbReference type="PANTHER" id="PTHR42848:SF1">
    <property type="entry name" value="HOLLIDAY JUNCTION BRANCH MIGRATION COMPLEX SUBUNIT RUVB"/>
    <property type="match status" value="1"/>
</dbReference>
<dbReference type="Pfam" id="PF17864">
    <property type="entry name" value="AAA_lid_4"/>
    <property type="match status" value="1"/>
</dbReference>
<dbReference type="Pfam" id="PF05491">
    <property type="entry name" value="RuvB_C"/>
    <property type="match status" value="1"/>
</dbReference>
<dbReference type="Pfam" id="PF05496">
    <property type="entry name" value="RuvB_N"/>
    <property type="match status" value="1"/>
</dbReference>
<dbReference type="SMART" id="SM00382">
    <property type="entry name" value="AAA"/>
    <property type="match status" value="1"/>
</dbReference>
<dbReference type="SUPFAM" id="SSF52540">
    <property type="entry name" value="P-loop containing nucleoside triphosphate hydrolases"/>
    <property type="match status" value="1"/>
</dbReference>
<dbReference type="SUPFAM" id="SSF46785">
    <property type="entry name" value="Winged helix' DNA-binding domain"/>
    <property type="match status" value="1"/>
</dbReference>
<comment type="function">
    <text evidence="1">The RuvA-RuvB-RuvC complex processes Holliday junction (HJ) DNA during genetic recombination and DNA repair, while the RuvA-RuvB complex plays an important role in the rescue of blocked DNA replication forks via replication fork reversal (RFR). RuvA specifically binds to HJ cruciform DNA, conferring on it an open structure. The RuvB hexamer acts as an ATP-dependent pump, pulling dsDNA into and through the RuvAB complex. RuvB forms 2 homohexamers on either side of HJ DNA bound by 1 or 2 RuvA tetramers; 4 subunits per hexamer contact DNA at a time. Coordinated motions by a converter formed by DNA-disengaged RuvB subunits stimulates ATP hydrolysis and nucleotide exchange. Immobilization of the converter enables RuvB to convert the ATP-contained energy into a lever motion, pulling 2 nucleotides of DNA out of the RuvA tetramer per ATP hydrolyzed, thus driving DNA branch migration. The RuvB motors rotate together with the DNA substrate, which together with the progressing nucleotide cycle form the mechanistic basis for DNA recombination by continuous HJ branch migration. Branch migration allows RuvC to scan DNA until it finds its consensus sequence, where it cleaves and resolves cruciform DNA.</text>
</comment>
<comment type="catalytic activity">
    <reaction evidence="1">
        <text>ATP + H2O = ADP + phosphate + H(+)</text>
        <dbReference type="Rhea" id="RHEA:13065"/>
        <dbReference type="ChEBI" id="CHEBI:15377"/>
        <dbReference type="ChEBI" id="CHEBI:15378"/>
        <dbReference type="ChEBI" id="CHEBI:30616"/>
        <dbReference type="ChEBI" id="CHEBI:43474"/>
        <dbReference type="ChEBI" id="CHEBI:456216"/>
    </reaction>
</comment>
<comment type="subunit">
    <text evidence="1">Homohexamer. Forms an RuvA(8)-RuvB(12)-Holliday junction (HJ) complex. HJ DNA is sandwiched between 2 RuvA tetramers; dsDNA enters through RuvA and exits via RuvB. An RuvB hexamer assembles on each DNA strand where it exits the tetramer. Each RuvB hexamer is contacted by two RuvA subunits (via domain III) on 2 adjacent RuvB subunits; this complex drives branch migration. In the full resolvosome a probable DNA-RuvA(4)-RuvB(12)-RuvC(2) complex forms which resolves the HJ.</text>
</comment>
<comment type="subcellular location">
    <subcellularLocation>
        <location evidence="1">Cytoplasm</location>
    </subcellularLocation>
</comment>
<comment type="domain">
    <text evidence="1">Has 3 domains, the large (RuvB-L) and small ATPase (RuvB-S) domains and the C-terminal head (RuvB-H) domain. The head domain binds DNA, while the ATPase domains jointly bind ATP, ADP or are empty depending on the state of the subunit in the translocation cycle. During a single DNA translocation step the structure of each domain remains the same, but their relative positions change.</text>
</comment>
<comment type="similarity">
    <text evidence="1">Belongs to the RuvB family.</text>
</comment>